<accession>A0LFC4</accession>
<gene>
    <name evidence="1" type="primary">rpmI</name>
    <name type="ordered locus">Sfum_0426</name>
</gene>
<organism>
    <name type="scientific">Syntrophobacter fumaroxidans (strain DSM 10017 / MPOB)</name>
    <dbReference type="NCBI Taxonomy" id="335543"/>
    <lineage>
        <taxon>Bacteria</taxon>
        <taxon>Pseudomonadati</taxon>
        <taxon>Thermodesulfobacteriota</taxon>
        <taxon>Syntrophobacteria</taxon>
        <taxon>Syntrophobacterales</taxon>
        <taxon>Syntrophobacteraceae</taxon>
        <taxon>Syntrophobacter</taxon>
    </lineage>
</organism>
<name>RL35_SYNFM</name>
<comment type="similarity">
    <text evidence="1">Belongs to the bacterial ribosomal protein bL35 family.</text>
</comment>
<keyword id="KW-1185">Reference proteome</keyword>
<keyword id="KW-0687">Ribonucleoprotein</keyword>
<keyword id="KW-0689">Ribosomal protein</keyword>
<sequence length="65" mass="7534">MPKMKTNRAAAKRFKRTGTGKFMRARANKSHILTKKSPQRKRRLRQGTAVDAINVRALEHMLPYL</sequence>
<feature type="chain" id="PRO_1000050780" description="Large ribosomal subunit protein bL35">
    <location>
        <begin position="1"/>
        <end position="65"/>
    </location>
</feature>
<reference key="1">
    <citation type="submission" date="2006-10" db="EMBL/GenBank/DDBJ databases">
        <title>Complete sequence of Syntrophobacter fumaroxidans MPOB.</title>
        <authorList>
            <consortium name="US DOE Joint Genome Institute"/>
            <person name="Copeland A."/>
            <person name="Lucas S."/>
            <person name="Lapidus A."/>
            <person name="Barry K."/>
            <person name="Detter J.C."/>
            <person name="Glavina del Rio T."/>
            <person name="Hammon N."/>
            <person name="Israni S."/>
            <person name="Pitluck S."/>
            <person name="Goltsman E.G."/>
            <person name="Martinez M."/>
            <person name="Schmutz J."/>
            <person name="Larimer F."/>
            <person name="Land M."/>
            <person name="Hauser L."/>
            <person name="Kyrpides N."/>
            <person name="Kim E."/>
            <person name="Boone D.R."/>
            <person name="Brockman F."/>
            <person name="Culley D."/>
            <person name="Ferry J."/>
            <person name="Gunsalus R."/>
            <person name="McInerney M.J."/>
            <person name="Morrison M."/>
            <person name="Plugge C."/>
            <person name="Rohlin L."/>
            <person name="Scholten J."/>
            <person name="Sieber J."/>
            <person name="Stams A.J.M."/>
            <person name="Worm P."/>
            <person name="Henstra A.M."/>
            <person name="Richardson P."/>
        </authorList>
    </citation>
    <scope>NUCLEOTIDE SEQUENCE [LARGE SCALE GENOMIC DNA]</scope>
    <source>
        <strain>DSM 10017 / MPOB</strain>
    </source>
</reference>
<dbReference type="EMBL" id="CP000478">
    <property type="protein sequence ID" value="ABK16126.1"/>
    <property type="molecule type" value="Genomic_DNA"/>
</dbReference>
<dbReference type="RefSeq" id="WP_011697299.1">
    <property type="nucleotide sequence ID" value="NC_008554.1"/>
</dbReference>
<dbReference type="SMR" id="A0LFC4"/>
<dbReference type="FunCoup" id="A0LFC4">
    <property type="interactions" value="386"/>
</dbReference>
<dbReference type="STRING" id="335543.Sfum_0426"/>
<dbReference type="KEGG" id="sfu:Sfum_0426"/>
<dbReference type="eggNOG" id="COG0291">
    <property type="taxonomic scope" value="Bacteria"/>
</dbReference>
<dbReference type="HOGENOM" id="CLU_169643_1_1_7"/>
<dbReference type="InParanoid" id="A0LFC4"/>
<dbReference type="OrthoDB" id="9804851at2"/>
<dbReference type="Proteomes" id="UP000001784">
    <property type="component" value="Chromosome"/>
</dbReference>
<dbReference type="GO" id="GO:0022625">
    <property type="term" value="C:cytosolic large ribosomal subunit"/>
    <property type="evidence" value="ECO:0007669"/>
    <property type="project" value="TreeGrafter"/>
</dbReference>
<dbReference type="GO" id="GO:0003735">
    <property type="term" value="F:structural constituent of ribosome"/>
    <property type="evidence" value="ECO:0007669"/>
    <property type="project" value="InterPro"/>
</dbReference>
<dbReference type="GO" id="GO:0006412">
    <property type="term" value="P:translation"/>
    <property type="evidence" value="ECO:0007669"/>
    <property type="project" value="UniProtKB-UniRule"/>
</dbReference>
<dbReference type="FunFam" id="4.10.410.60:FF:000001">
    <property type="entry name" value="50S ribosomal protein L35"/>
    <property type="match status" value="1"/>
</dbReference>
<dbReference type="Gene3D" id="4.10.410.60">
    <property type="match status" value="1"/>
</dbReference>
<dbReference type="HAMAP" id="MF_00514">
    <property type="entry name" value="Ribosomal_bL35"/>
    <property type="match status" value="1"/>
</dbReference>
<dbReference type="InterPro" id="IPR001706">
    <property type="entry name" value="Ribosomal_bL35"/>
</dbReference>
<dbReference type="InterPro" id="IPR021137">
    <property type="entry name" value="Ribosomal_bL35-like"/>
</dbReference>
<dbReference type="InterPro" id="IPR018265">
    <property type="entry name" value="Ribosomal_bL35_CS"/>
</dbReference>
<dbReference type="InterPro" id="IPR037229">
    <property type="entry name" value="Ribosomal_bL35_sf"/>
</dbReference>
<dbReference type="NCBIfam" id="TIGR00001">
    <property type="entry name" value="rpmI_bact"/>
    <property type="match status" value="1"/>
</dbReference>
<dbReference type="PANTHER" id="PTHR33343">
    <property type="entry name" value="54S RIBOSOMAL PROTEIN BL35M"/>
    <property type="match status" value="1"/>
</dbReference>
<dbReference type="PANTHER" id="PTHR33343:SF1">
    <property type="entry name" value="LARGE RIBOSOMAL SUBUNIT PROTEIN BL35M"/>
    <property type="match status" value="1"/>
</dbReference>
<dbReference type="Pfam" id="PF01632">
    <property type="entry name" value="Ribosomal_L35p"/>
    <property type="match status" value="1"/>
</dbReference>
<dbReference type="PRINTS" id="PR00064">
    <property type="entry name" value="RIBOSOMALL35"/>
</dbReference>
<dbReference type="SUPFAM" id="SSF143034">
    <property type="entry name" value="L35p-like"/>
    <property type="match status" value="1"/>
</dbReference>
<dbReference type="PROSITE" id="PS00936">
    <property type="entry name" value="RIBOSOMAL_L35"/>
    <property type="match status" value="1"/>
</dbReference>
<proteinExistence type="inferred from homology"/>
<protein>
    <recommendedName>
        <fullName evidence="1">Large ribosomal subunit protein bL35</fullName>
    </recommendedName>
    <alternativeName>
        <fullName evidence="2">50S ribosomal protein L35</fullName>
    </alternativeName>
</protein>
<evidence type="ECO:0000255" key="1">
    <source>
        <dbReference type="HAMAP-Rule" id="MF_00514"/>
    </source>
</evidence>
<evidence type="ECO:0000305" key="2"/>